<feature type="chain" id="PRO_1000031148" description="Ribonuclease HII">
    <location>
        <begin position="1"/>
        <end position="197"/>
    </location>
</feature>
<feature type="domain" description="RNase H type-2" evidence="2">
    <location>
        <begin position="9"/>
        <end position="197"/>
    </location>
</feature>
<feature type="binding site" evidence="1">
    <location>
        <position position="15"/>
    </location>
    <ligand>
        <name>a divalent metal cation</name>
        <dbReference type="ChEBI" id="CHEBI:60240"/>
    </ligand>
</feature>
<feature type="binding site" evidence="1">
    <location>
        <position position="16"/>
    </location>
    <ligand>
        <name>a divalent metal cation</name>
        <dbReference type="ChEBI" id="CHEBI:60240"/>
    </ligand>
</feature>
<feature type="binding site" evidence="1">
    <location>
        <position position="107"/>
    </location>
    <ligand>
        <name>a divalent metal cation</name>
        <dbReference type="ChEBI" id="CHEBI:60240"/>
    </ligand>
</feature>
<accession>A5UD45</accession>
<keyword id="KW-0963">Cytoplasm</keyword>
<keyword id="KW-0255">Endonuclease</keyword>
<keyword id="KW-0378">Hydrolase</keyword>
<keyword id="KW-0464">Manganese</keyword>
<keyword id="KW-0479">Metal-binding</keyword>
<keyword id="KW-0540">Nuclease</keyword>
<sequence>MFEYPQGYKLIAGVDEVGRGPLVGAVVTAAVILDPHNPIEGLADSKKLSEKKRLALADEIKEKALAWALGRAEADEIDEINILQASLLAMTRAVKSLKIQPHFVLVDGNKIPKDLDIPAQAVVKGDSIVAEISAASILAKVARDQEMEELDKQYPEYAFAKHKGYPTKLHLEKLAELGALPQHRRSFAPVKKALEQF</sequence>
<dbReference type="EC" id="3.1.26.4" evidence="1"/>
<dbReference type="EMBL" id="CP000671">
    <property type="protein sequence ID" value="ABQ98696.1"/>
    <property type="molecule type" value="Genomic_DNA"/>
</dbReference>
<dbReference type="SMR" id="A5UD45"/>
<dbReference type="KEGG" id="hip:CGSHiEE_06785"/>
<dbReference type="HOGENOM" id="CLU_036532_3_2_6"/>
<dbReference type="GO" id="GO:0005737">
    <property type="term" value="C:cytoplasm"/>
    <property type="evidence" value="ECO:0007669"/>
    <property type="project" value="UniProtKB-SubCell"/>
</dbReference>
<dbReference type="GO" id="GO:0032299">
    <property type="term" value="C:ribonuclease H2 complex"/>
    <property type="evidence" value="ECO:0007669"/>
    <property type="project" value="TreeGrafter"/>
</dbReference>
<dbReference type="GO" id="GO:0030145">
    <property type="term" value="F:manganese ion binding"/>
    <property type="evidence" value="ECO:0007669"/>
    <property type="project" value="UniProtKB-UniRule"/>
</dbReference>
<dbReference type="GO" id="GO:0003723">
    <property type="term" value="F:RNA binding"/>
    <property type="evidence" value="ECO:0007669"/>
    <property type="project" value="InterPro"/>
</dbReference>
<dbReference type="GO" id="GO:0004523">
    <property type="term" value="F:RNA-DNA hybrid ribonuclease activity"/>
    <property type="evidence" value="ECO:0007669"/>
    <property type="project" value="UniProtKB-UniRule"/>
</dbReference>
<dbReference type="GO" id="GO:0043137">
    <property type="term" value="P:DNA replication, removal of RNA primer"/>
    <property type="evidence" value="ECO:0007669"/>
    <property type="project" value="TreeGrafter"/>
</dbReference>
<dbReference type="GO" id="GO:0006298">
    <property type="term" value="P:mismatch repair"/>
    <property type="evidence" value="ECO:0007669"/>
    <property type="project" value="TreeGrafter"/>
</dbReference>
<dbReference type="CDD" id="cd07182">
    <property type="entry name" value="RNase_HII_bacteria_HII_like"/>
    <property type="match status" value="1"/>
</dbReference>
<dbReference type="FunFam" id="3.30.420.10:FF:000006">
    <property type="entry name" value="Ribonuclease HII"/>
    <property type="match status" value="1"/>
</dbReference>
<dbReference type="Gene3D" id="3.30.420.10">
    <property type="entry name" value="Ribonuclease H-like superfamily/Ribonuclease H"/>
    <property type="match status" value="1"/>
</dbReference>
<dbReference type="HAMAP" id="MF_00052_B">
    <property type="entry name" value="RNase_HII_B"/>
    <property type="match status" value="1"/>
</dbReference>
<dbReference type="InterPro" id="IPR022898">
    <property type="entry name" value="RNase_HII"/>
</dbReference>
<dbReference type="InterPro" id="IPR001352">
    <property type="entry name" value="RNase_HII/HIII"/>
</dbReference>
<dbReference type="InterPro" id="IPR024567">
    <property type="entry name" value="RNase_HII/HIII_dom"/>
</dbReference>
<dbReference type="InterPro" id="IPR012337">
    <property type="entry name" value="RNaseH-like_sf"/>
</dbReference>
<dbReference type="InterPro" id="IPR036397">
    <property type="entry name" value="RNaseH_sf"/>
</dbReference>
<dbReference type="NCBIfam" id="NF000594">
    <property type="entry name" value="PRK00015.1-1"/>
    <property type="match status" value="1"/>
</dbReference>
<dbReference type="NCBIfam" id="NF000595">
    <property type="entry name" value="PRK00015.1-3"/>
    <property type="match status" value="1"/>
</dbReference>
<dbReference type="NCBIfam" id="NF000596">
    <property type="entry name" value="PRK00015.1-4"/>
    <property type="match status" value="1"/>
</dbReference>
<dbReference type="PANTHER" id="PTHR10954">
    <property type="entry name" value="RIBONUCLEASE H2 SUBUNIT A"/>
    <property type="match status" value="1"/>
</dbReference>
<dbReference type="PANTHER" id="PTHR10954:SF18">
    <property type="entry name" value="RIBONUCLEASE HII"/>
    <property type="match status" value="1"/>
</dbReference>
<dbReference type="Pfam" id="PF01351">
    <property type="entry name" value="RNase_HII"/>
    <property type="match status" value="1"/>
</dbReference>
<dbReference type="SUPFAM" id="SSF53098">
    <property type="entry name" value="Ribonuclease H-like"/>
    <property type="match status" value="1"/>
</dbReference>
<dbReference type="PROSITE" id="PS51975">
    <property type="entry name" value="RNASE_H_2"/>
    <property type="match status" value="1"/>
</dbReference>
<gene>
    <name evidence="1" type="primary">rnhB</name>
    <name type="ordered locus">CGSHiEE_06785</name>
</gene>
<proteinExistence type="inferred from homology"/>
<organism>
    <name type="scientific">Haemophilus influenzae (strain PittEE)</name>
    <dbReference type="NCBI Taxonomy" id="374930"/>
    <lineage>
        <taxon>Bacteria</taxon>
        <taxon>Pseudomonadati</taxon>
        <taxon>Pseudomonadota</taxon>
        <taxon>Gammaproteobacteria</taxon>
        <taxon>Pasteurellales</taxon>
        <taxon>Pasteurellaceae</taxon>
        <taxon>Haemophilus</taxon>
    </lineage>
</organism>
<evidence type="ECO:0000255" key="1">
    <source>
        <dbReference type="HAMAP-Rule" id="MF_00052"/>
    </source>
</evidence>
<evidence type="ECO:0000255" key="2">
    <source>
        <dbReference type="PROSITE-ProRule" id="PRU01319"/>
    </source>
</evidence>
<protein>
    <recommendedName>
        <fullName evidence="1">Ribonuclease HII</fullName>
        <shortName evidence="1">RNase HII</shortName>
        <ecNumber evidence="1">3.1.26.4</ecNumber>
    </recommendedName>
</protein>
<comment type="function">
    <text evidence="1">Endonuclease that specifically degrades the RNA of RNA-DNA hybrids.</text>
</comment>
<comment type="catalytic activity">
    <reaction evidence="1">
        <text>Endonucleolytic cleavage to 5'-phosphomonoester.</text>
        <dbReference type="EC" id="3.1.26.4"/>
    </reaction>
</comment>
<comment type="cofactor">
    <cofactor evidence="1">
        <name>Mn(2+)</name>
        <dbReference type="ChEBI" id="CHEBI:29035"/>
    </cofactor>
    <cofactor evidence="1">
        <name>Mg(2+)</name>
        <dbReference type="ChEBI" id="CHEBI:18420"/>
    </cofactor>
    <text evidence="1">Manganese or magnesium. Binds 1 divalent metal ion per monomer in the absence of substrate. May bind a second metal ion after substrate binding.</text>
</comment>
<comment type="subcellular location">
    <subcellularLocation>
        <location evidence="1">Cytoplasm</location>
    </subcellularLocation>
</comment>
<comment type="similarity">
    <text evidence="1">Belongs to the RNase HII family.</text>
</comment>
<reference key="1">
    <citation type="journal article" date="2007" name="Genome Biol.">
        <title>Characterization and modeling of the Haemophilus influenzae core and supragenomes based on the complete genomic sequences of Rd and 12 clinical nontypeable strains.</title>
        <authorList>
            <person name="Hogg J.S."/>
            <person name="Hu F.Z."/>
            <person name="Janto B."/>
            <person name="Boissy R."/>
            <person name="Hayes J."/>
            <person name="Keefe R."/>
            <person name="Post J.C."/>
            <person name="Ehrlich G.D."/>
        </authorList>
    </citation>
    <scope>NUCLEOTIDE SEQUENCE [LARGE SCALE GENOMIC DNA]</scope>
    <source>
        <strain>PittEE</strain>
    </source>
</reference>
<name>RNH2_HAEIE</name>